<keyword id="KW-1003">Cell membrane</keyword>
<keyword id="KW-0472">Membrane</keyword>
<keyword id="KW-0592">Phosphate transport</keyword>
<keyword id="KW-1185">Reference proteome</keyword>
<keyword id="KW-0769">Symport</keyword>
<keyword id="KW-0812">Transmembrane</keyword>
<keyword id="KW-1133">Transmembrane helix</keyword>
<keyword id="KW-0813">Transport</keyword>
<sequence>MDILLILTILIVICALAFDFINGFHDTANAIATSVSTKALKPRHAIILAAVMNFVGAMTFTGVAKTITKDIVDPYTLENGSVVILAALLAAIAWNLITWYYGIPSSSSHAIIGAIAGAAIAAAGFAALNYKGFIKIIEALILSPIIAFVLGFILYSIVKLIFKDSNLAKTNKQFRRVQIVTAALQSYTHGTNDAQKAMGIITMALITANLHTSANDIPTWVQFACATAMGLGTSIGGWKIIKTVGGKIMKIRPVNGVSADLTGAAIIFGATFIHLPVSTTHVISSSILGVGASHRVKGVNWGTAKRMLITWVITLPISATLGAIAYFILNMIF</sequence>
<name>PIT_BACSU</name>
<accession>O34436</accession>
<comment type="function">
    <text evidence="1">Low-affinity inorganic phosphate transporter.</text>
</comment>
<comment type="catalytic activity">
    <reaction evidence="1">
        <text>phosphate(in) + H(+)(in) = phosphate(out) + H(+)(out)</text>
        <dbReference type="Rhea" id="RHEA:29939"/>
        <dbReference type="ChEBI" id="CHEBI:15378"/>
        <dbReference type="ChEBI" id="CHEBI:43474"/>
    </reaction>
</comment>
<comment type="subcellular location">
    <subcellularLocation>
        <location evidence="3">Cell membrane</location>
        <topology evidence="2">Multi-pass membrane protein</topology>
    </subcellularLocation>
</comment>
<comment type="similarity">
    <text evidence="3">Belongs to the inorganic phosphate transporter (PiT) (TC 2.A.20) family. Pit subfamily.</text>
</comment>
<protein>
    <recommendedName>
        <fullName>Probable low-affinity inorganic phosphate transporter</fullName>
    </recommendedName>
</protein>
<feature type="chain" id="PRO_0000080786" description="Probable low-affinity inorganic phosphate transporter">
    <location>
        <begin position="1"/>
        <end position="333"/>
    </location>
</feature>
<feature type="transmembrane region" description="Helical" evidence="2">
    <location>
        <begin position="1"/>
        <end position="21"/>
    </location>
</feature>
<feature type="transmembrane region" description="Helical" evidence="2">
    <location>
        <begin position="44"/>
        <end position="64"/>
    </location>
</feature>
<feature type="transmembrane region" description="Helical" evidence="2">
    <location>
        <begin position="83"/>
        <end position="103"/>
    </location>
</feature>
<feature type="transmembrane region" description="Helical" evidence="2">
    <location>
        <begin position="110"/>
        <end position="130"/>
    </location>
</feature>
<feature type="transmembrane region" description="Helical" evidence="2">
    <location>
        <begin position="136"/>
        <end position="156"/>
    </location>
</feature>
<feature type="transmembrane region" description="Helical" evidence="2">
    <location>
        <begin position="217"/>
        <end position="237"/>
    </location>
</feature>
<feature type="transmembrane region" description="Helical" evidence="2">
    <location>
        <begin position="263"/>
        <end position="283"/>
    </location>
</feature>
<feature type="transmembrane region" description="Helical" evidence="2">
    <location>
        <begin position="308"/>
        <end position="328"/>
    </location>
</feature>
<feature type="sequence conflict" description="In Ref. 1; CAA05564." evidence="3" ref="1">
    <original>MLITWVITLPISATLGAIAYFILNMIF</original>
    <variation>ISLHGSSRFRFQRHLVPSPTLF</variation>
    <location>
        <begin position="307"/>
        <end position="333"/>
    </location>
</feature>
<proteinExistence type="inferred from homology"/>
<organism>
    <name type="scientific">Bacillus subtilis (strain 168)</name>
    <dbReference type="NCBI Taxonomy" id="224308"/>
    <lineage>
        <taxon>Bacteria</taxon>
        <taxon>Bacillati</taxon>
        <taxon>Bacillota</taxon>
        <taxon>Bacilli</taxon>
        <taxon>Bacillales</taxon>
        <taxon>Bacillaceae</taxon>
        <taxon>Bacillus</taxon>
    </lineage>
</organism>
<reference key="1">
    <citation type="submission" date="1997-11" db="EMBL/GenBank/DDBJ databases">
        <title>Sequence of the Bacillus subtilis genome between xlyA and ykoR.</title>
        <authorList>
            <person name="Devine K.M."/>
        </authorList>
    </citation>
    <scope>NUCLEOTIDE SEQUENCE [GENOMIC DNA]</scope>
    <source>
        <strain>168</strain>
    </source>
</reference>
<reference key="2">
    <citation type="journal article" date="1997" name="Nature">
        <title>The complete genome sequence of the Gram-positive bacterium Bacillus subtilis.</title>
        <authorList>
            <person name="Kunst F."/>
            <person name="Ogasawara N."/>
            <person name="Moszer I."/>
            <person name="Albertini A.M."/>
            <person name="Alloni G."/>
            <person name="Azevedo V."/>
            <person name="Bertero M.G."/>
            <person name="Bessieres P."/>
            <person name="Bolotin A."/>
            <person name="Borchert S."/>
            <person name="Borriss R."/>
            <person name="Boursier L."/>
            <person name="Brans A."/>
            <person name="Braun M."/>
            <person name="Brignell S.C."/>
            <person name="Bron S."/>
            <person name="Brouillet S."/>
            <person name="Bruschi C.V."/>
            <person name="Caldwell B."/>
            <person name="Capuano V."/>
            <person name="Carter N.M."/>
            <person name="Choi S.-K."/>
            <person name="Codani J.-J."/>
            <person name="Connerton I.F."/>
            <person name="Cummings N.J."/>
            <person name="Daniel R.A."/>
            <person name="Denizot F."/>
            <person name="Devine K.M."/>
            <person name="Duesterhoeft A."/>
            <person name="Ehrlich S.D."/>
            <person name="Emmerson P.T."/>
            <person name="Entian K.-D."/>
            <person name="Errington J."/>
            <person name="Fabret C."/>
            <person name="Ferrari E."/>
            <person name="Foulger D."/>
            <person name="Fritz C."/>
            <person name="Fujita M."/>
            <person name="Fujita Y."/>
            <person name="Fuma S."/>
            <person name="Galizzi A."/>
            <person name="Galleron N."/>
            <person name="Ghim S.-Y."/>
            <person name="Glaser P."/>
            <person name="Goffeau A."/>
            <person name="Golightly E.J."/>
            <person name="Grandi G."/>
            <person name="Guiseppi G."/>
            <person name="Guy B.J."/>
            <person name="Haga K."/>
            <person name="Haiech J."/>
            <person name="Harwood C.R."/>
            <person name="Henaut A."/>
            <person name="Hilbert H."/>
            <person name="Holsappel S."/>
            <person name="Hosono S."/>
            <person name="Hullo M.-F."/>
            <person name="Itaya M."/>
            <person name="Jones L.-M."/>
            <person name="Joris B."/>
            <person name="Karamata D."/>
            <person name="Kasahara Y."/>
            <person name="Klaerr-Blanchard M."/>
            <person name="Klein C."/>
            <person name="Kobayashi Y."/>
            <person name="Koetter P."/>
            <person name="Koningstein G."/>
            <person name="Krogh S."/>
            <person name="Kumano M."/>
            <person name="Kurita K."/>
            <person name="Lapidus A."/>
            <person name="Lardinois S."/>
            <person name="Lauber J."/>
            <person name="Lazarevic V."/>
            <person name="Lee S.-M."/>
            <person name="Levine A."/>
            <person name="Liu H."/>
            <person name="Masuda S."/>
            <person name="Mauel C."/>
            <person name="Medigue C."/>
            <person name="Medina N."/>
            <person name="Mellado R.P."/>
            <person name="Mizuno M."/>
            <person name="Moestl D."/>
            <person name="Nakai S."/>
            <person name="Noback M."/>
            <person name="Noone D."/>
            <person name="O'Reilly M."/>
            <person name="Ogawa K."/>
            <person name="Ogiwara A."/>
            <person name="Oudega B."/>
            <person name="Park S.-H."/>
            <person name="Parro V."/>
            <person name="Pohl T.M."/>
            <person name="Portetelle D."/>
            <person name="Porwollik S."/>
            <person name="Prescott A.M."/>
            <person name="Presecan E."/>
            <person name="Pujic P."/>
            <person name="Purnelle B."/>
            <person name="Rapoport G."/>
            <person name="Rey M."/>
            <person name="Reynolds S."/>
            <person name="Rieger M."/>
            <person name="Rivolta C."/>
            <person name="Rocha E."/>
            <person name="Roche B."/>
            <person name="Rose M."/>
            <person name="Sadaie Y."/>
            <person name="Sato T."/>
            <person name="Scanlan E."/>
            <person name="Schleich S."/>
            <person name="Schroeter R."/>
            <person name="Scoffone F."/>
            <person name="Sekiguchi J."/>
            <person name="Sekowska A."/>
            <person name="Seror S.J."/>
            <person name="Serror P."/>
            <person name="Shin B.-S."/>
            <person name="Soldo B."/>
            <person name="Sorokin A."/>
            <person name="Tacconi E."/>
            <person name="Takagi T."/>
            <person name="Takahashi H."/>
            <person name="Takemaru K."/>
            <person name="Takeuchi M."/>
            <person name="Tamakoshi A."/>
            <person name="Tanaka T."/>
            <person name="Terpstra P."/>
            <person name="Tognoni A."/>
            <person name="Tosato V."/>
            <person name="Uchiyama S."/>
            <person name="Vandenbol M."/>
            <person name="Vannier F."/>
            <person name="Vassarotti A."/>
            <person name="Viari A."/>
            <person name="Wambutt R."/>
            <person name="Wedler E."/>
            <person name="Wedler H."/>
            <person name="Weitzenegger T."/>
            <person name="Winters P."/>
            <person name="Wipat A."/>
            <person name="Yamamoto H."/>
            <person name="Yamane K."/>
            <person name="Yasumoto K."/>
            <person name="Yata K."/>
            <person name="Yoshida K."/>
            <person name="Yoshikawa H.-F."/>
            <person name="Zumstein E."/>
            <person name="Yoshikawa H."/>
            <person name="Danchin A."/>
        </authorList>
    </citation>
    <scope>NUCLEOTIDE SEQUENCE [LARGE SCALE GENOMIC DNA]</scope>
    <source>
        <strain>168</strain>
    </source>
</reference>
<reference key="3">
    <citation type="journal article" date="2009" name="Microbiology">
        <title>From a consortium sequence to a unified sequence: the Bacillus subtilis 168 reference genome a decade later.</title>
        <authorList>
            <person name="Barbe V."/>
            <person name="Cruveiller S."/>
            <person name="Kunst F."/>
            <person name="Lenoble P."/>
            <person name="Meurice G."/>
            <person name="Sekowska A."/>
            <person name="Vallenet D."/>
            <person name="Wang T."/>
            <person name="Moszer I."/>
            <person name="Medigue C."/>
            <person name="Danchin A."/>
        </authorList>
    </citation>
    <scope>SEQUENCE REVISION TO C-TERMINUS</scope>
</reference>
<evidence type="ECO:0000250" key="1">
    <source>
        <dbReference type="UniProtKB" id="P0AFJ7"/>
    </source>
</evidence>
<evidence type="ECO:0000255" key="2"/>
<evidence type="ECO:0000305" key="3"/>
<gene>
    <name type="primary">pit</name>
    <name type="synonym">ykaB</name>
    <name type="ordered locus">BSU12840</name>
</gene>
<dbReference type="EMBL" id="AJ002571">
    <property type="protein sequence ID" value="CAA05564.1"/>
    <property type="molecule type" value="Genomic_DNA"/>
</dbReference>
<dbReference type="EMBL" id="AL009126">
    <property type="protein sequence ID" value="CAB13141.2"/>
    <property type="molecule type" value="Genomic_DNA"/>
</dbReference>
<dbReference type="PIR" id="A69855">
    <property type="entry name" value="A69855"/>
</dbReference>
<dbReference type="RefSeq" id="WP_003232642.1">
    <property type="nucleotide sequence ID" value="NZ_OZ025638.1"/>
</dbReference>
<dbReference type="SMR" id="O34436"/>
<dbReference type="FunCoup" id="O34436">
    <property type="interactions" value="570"/>
</dbReference>
<dbReference type="STRING" id="224308.BSU12840"/>
<dbReference type="PaxDb" id="224308-BSU12840"/>
<dbReference type="EnsemblBacteria" id="CAB13141">
    <property type="protein sequence ID" value="CAB13141"/>
    <property type="gene ID" value="BSU_12840"/>
</dbReference>
<dbReference type="GeneID" id="936281"/>
<dbReference type="KEGG" id="bsu:BSU12840"/>
<dbReference type="PATRIC" id="fig|224308.179.peg.1393"/>
<dbReference type="eggNOG" id="COG0306">
    <property type="taxonomic scope" value="Bacteria"/>
</dbReference>
<dbReference type="InParanoid" id="O34436"/>
<dbReference type="OrthoDB" id="9779554at2"/>
<dbReference type="PhylomeDB" id="O34436"/>
<dbReference type="BioCyc" id="BSUB:BSU12840-MONOMER"/>
<dbReference type="Proteomes" id="UP000001570">
    <property type="component" value="Chromosome"/>
</dbReference>
<dbReference type="GO" id="GO:0005886">
    <property type="term" value="C:plasma membrane"/>
    <property type="evidence" value="ECO:0007669"/>
    <property type="project" value="UniProtKB-SubCell"/>
</dbReference>
<dbReference type="GO" id="GO:0005315">
    <property type="term" value="F:phosphate transmembrane transporter activity"/>
    <property type="evidence" value="ECO:0000318"/>
    <property type="project" value="GO_Central"/>
</dbReference>
<dbReference type="GO" id="GO:0015293">
    <property type="term" value="F:symporter activity"/>
    <property type="evidence" value="ECO:0007669"/>
    <property type="project" value="UniProtKB-KW"/>
</dbReference>
<dbReference type="GO" id="GO:0035435">
    <property type="term" value="P:phosphate ion transmembrane transport"/>
    <property type="evidence" value="ECO:0000318"/>
    <property type="project" value="GO_Central"/>
</dbReference>
<dbReference type="InterPro" id="IPR001204">
    <property type="entry name" value="Phos_transporter"/>
</dbReference>
<dbReference type="PANTHER" id="PTHR11101">
    <property type="entry name" value="PHOSPHATE TRANSPORTER"/>
    <property type="match status" value="1"/>
</dbReference>
<dbReference type="PANTHER" id="PTHR11101:SF80">
    <property type="entry name" value="PHOSPHATE TRANSPORTER"/>
    <property type="match status" value="1"/>
</dbReference>
<dbReference type="Pfam" id="PF01384">
    <property type="entry name" value="PHO4"/>
    <property type="match status" value="1"/>
</dbReference>